<name>GCSH_TROWT</name>
<gene>
    <name evidence="1" type="primary">gcvH</name>
    <name type="ordered locus">TWT_637</name>
</gene>
<proteinExistence type="inferred from homology"/>
<reference key="1">
    <citation type="journal article" date="2003" name="Genome Res.">
        <title>Tropheryma whipplei twist: a human pathogenic Actinobacteria with a reduced genome.</title>
        <authorList>
            <person name="Raoult D."/>
            <person name="Ogata H."/>
            <person name="Audic S."/>
            <person name="Robert C."/>
            <person name="Suhre K."/>
            <person name="Drancourt M."/>
            <person name="Claverie J.-M."/>
        </authorList>
    </citation>
    <scope>NUCLEOTIDE SEQUENCE [LARGE SCALE GENOMIC DNA]</scope>
    <source>
        <strain>Twist</strain>
    </source>
</reference>
<keyword id="KW-0450">Lipoyl</keyword>
<keyword id="KW-1185">Reference proteome</keyword>
<protein>
    <recommendedName>
        <fullName evidence="1">Glycine cleavage system H protein</fullName>
    </recommendedName>
</protein>
<evidence type="ECO:0000255" key="1">
    <source>
        <dbReference type="HAMAP-Rule" id="MF_00272"/>
    </source>
</evidence>
<evidence type="ECO:0000255" key="2">
    <source>
        <dbReference type="PROSITE-ProRule" id="PRU01066"/>
    </source>
</evidence>
<dbReference type="EMBL" id="AE014184">
    <property type="protein sequence ID" value="AAO44734.1"/>
    <property type="molecule type" value="Genomic_DNA"/>
</dbReference>
<dbReference type="RefSeq" id="WP_011096596.1">
    <property type="nucleotide sequence ID" value="NC_004572.3"/>
</dbReference>
<dbReference type="SMR" id="P64215"/>
<dbReference type="STRING" id="203267.TWT_637"/>
<dbReference type="GeneID" id="67388436"/>
<dbReference type="KEGG" id="twh:TWT_637"/>
<dbReference type="eggNOG" id="COG0509">
    <property type="taxonomic scope" value="Bacteria"/>
</dbReference>
<dbReference type="HOGENOM" id="CLU_097408_2_2_11"/>
<dbReference type="OrthoDB" id="9796712at2"/>
<dbReference type="Proteomes" id="UP000002200">
    <property type="component" value="Chromosome"/>
</dbReference>
<dbReference type="GO" id="GO:0005737">
    <property type="term" value="C:cytoplasm"/>
    <property type="evidence" value="ECO:0007669"/>
    <property type="project" value="TreeGrafter"/>
</dbReference>
<dbReference type="GO" id="GO:0005960">
    <property type="term" value="C:glycine cleavage complex"/>
    <property type="evidence" value="ECO:0007669"/>
    <property type="project" value="InterPro"/>
</dbReference>
<dbReference type="GO" id="GO:0019464">
    <property type="term" value="P:glycine decarboxylation via glycine cleavage system"/>
    <property type="evidence" value="ECO:0007669"/>
    <property type="project" value="UniProtKB-UniRule"/>
</dbReference>
<dbReference type="CDD" id="cd06848">
    <property type="entry name" value="GCS_H"/>
    <property type="match status" value="1"/>
</dbReference>
<dbReference type="Gene3D" id="2.40.50.100">
    <property type="match status" value="1"/>
</dbReference>
<dbReference type="HAMAP" id="MF_00272">
    <property type="entry name" value="GcvH"/>
    <property type="match status" value="1"/>
</dbReference>
<dbReference type="InterPro" id="IPR003016">
    <property type="entry name" value="2-oxoA_DH_lipoyl-BS"/>
</dbReference>
<dbReference type="InterPro" id="IPR000089">
    <property type="entry name" value="Biotin_lipoyl"/>
</dbReference>
<dbReference type="InterPro" id="IPR002930">
    <property type="entry name" value="GCV_H"/>
</dbReference>
<dbReference type="InterPro" id="IPR033753">
    <property type="entry name" value="GCV_H/Fam206"/>
</dbReference>
<dbReference type="InterPro" id="IPR011053">
    <property type="entry name" value="Single_hybrid_motif"/>
</dbReference>
<dbReference type="NCBIfam" id="NF002270">
    <property type="entry name" value="PRK01202.1"/>
    <property type="match status" value="1"/>
</dbReference>
<dbReference type="PANTHER" id="PTHR11715">
    <property type="entry name" value="GLYCINE CLEAVAGE SYSTEM H PROTEIN"/>
    <property type="match status" value="1"/>
</dbReference>
<dbReference type="PANTHER" id="PTHR11715:SF3">
    <property type="entry name" value="GLYCINE CLEAVAGE SYSTEM H PROTEIN-RELATED"/>
    <property type="match status" value="1"/>
</dbReference>
<dbReference type="Pfam" id="PF01597">
    <property type="entry name" value="GCV_H"/>
    <property type="match status" value="1"/>
</dbReference>
<dbReference type="SUPFAM" id="SSF51230">
    <property type="entry name" value="Single hybrid motif"/>
    <property type="match status" value="1"/>
</dbReference>
<dbReference type="PROSITE" id="PS50968">
    <property type="entry name" value="BIOTINYL_LIPOYL"/>
    <property type="match status" value="1"/>
</dbReference>
<dbReference type="PROSITE" id="PS00189">
    <property type="entry name" value="LIPOYL"/>
    <property type="match status" value="1"/>
</dbReference>
<accession>P64215</accession>
<accession>Q83MS2</accession>
<accession>Q83NB6</accession>
<organism>
    <name type="scientific">Tropheryma whipplei (strain Twist)</name>
    <name type="common">Whipple's bacillus</name>
    <dbReference type="NCBI Taxonomy" id="203267"/>
    <lineage>
        <taxon>Bacteria</taxon>
        <taxon>Bacillati</taxon>
        <taxon>Actinomycetota</taxon>
        <taxon>Actinomycetes</taxon>
        <taxon>Micrococcales</taxon>
        <taxon>Tropherymataceae</taxon>
        <taxon>Tropheryma</taxon>
    </lineage>
</organism>
<sequence length="121" mass="13618">MFDESDLVYSKEHEWVFIDDDIAWVGITKYAVKKLGDIVYIDLPSQDALIVQGECVGEIESTKSVSEIYSPVSGRVIAVNEDVISSPGLLNSDSSVWLFKAECENIPELMDWGQYSEYTKE</sequence>
<comment type="function">
    <text evidence="1">The glycine cleavage system catalyzes the degradation of glycine. The H protein shuttles the methylamine group of glycine from the P protein to the T protein.</text>
</comment>
<comment type="cofactor">
    <cofactor evidence="1">
        <name>(R)-lipoate</name>
        <dbReference type="ChEBI" id="CHEBI:83088"/>
    </cofactor>
    <text evidence="1">Binds 1 lipoyl cofactor covalently.</text>
</comment>
<comment type="subunit">
    <text evidence="1">The glycine cleavage system is composed of four proteins: P, T, L and H.</text>
</comment>
<comment type="similarity">
    <text evidence="1">Belongs to the GcvH family.</text>
</comment>
<feature type="chain" id="PRO_0000166261" description="Glycine cleavage system H protein">
    <location>
        <begin position="1"/>
        <end position="121"/>
    </location>
</feature>
<feature type="domain" description="Lipoyl-binding" evidence="2">
    <location>
        <begin position="22"/>
        <end position="102"/>
    </location>
</feature>
<feature type="modified residue" description="N6-lipoyllysine" evidence="1">
    <location>
        <position position="63"/>
    </location>
</feature>